<keyword id="KW-0963">Cytoplasm</keyword>
<keyword id="KW-0413">Isomerase</keyword>
<keyword id="KW-0627">Porphyrin biosynthesis</keyword>
<keyword id="KW-0663">Pyridoxal phosphate</keyword>
<accession>B5RHE0</accession>
<protein>
    <recommendedName>
        <fullName evidence="1">Glutamate-1-semialdehyde 2,1-aminomutase</fullName>
        <shortName evidence="1">GSA</shortName>
        <ecNumber evidence="1">5.4.3.8</ecNumber>
    </recommendedName>
    <alternativeName>
        <fullName evidence="1">Glutamate-1-semialdehyde aminotransferase</fullName>
        <shortName evidence="1">GSA-AT</shortName>
    </alternativeName>
</protein>
<comment type="catalytic activity">
    <reaction evidence="1">
        <text>(S)-4-amino-5-oxopentanoate = 5-aminolevulinate</text>
        <dbReference type="Rhea" id="RHEA:14265"/>
        <dbReference type="ChEBI" id="CHEBI:57501"/>
        <dbReference type="ChEBI" id="CHEBI:356416"/>
        <dbReference type="EC" id="5.4.3.8"/>
    </reaction>
</comment>
<comment type="cofactor">
    <cofactor evidence="1">
        <name>pyridoxal 5'-phosphate</name>
        <dbReference type="ChEBI" id="CHEBI:597326"/>
    </cofactor>
</comment>
<comment type="pathway">
    <text evidence="1">Porphyrin-containing compound metabolism; protoporphyrin-IX biosynthesis; 5-aminolevulinate from L-glutamyl-tRNA(Glu): step 2/2.</text>
</comment>
<comment type="subunit">
    <text evidence="1">Homodimer.</text>
</comment>
<comment type="subcellular location">
    <subcellularLocation>
        <location evidence="1">Cytoplasm</location>
    </subcellularLocation>
</comment>
<comment type="similarity">
    <text evidence="1">Belongs to the class-III pyridoxal-phosphate-dependent aminotransferase family. HemL subfamily.</text>
</comment>
<gene>
    <name evidence="1" type="primary">hemL</name>
    <name type="ordered locus">SG0206</name>
</gene>
<feature type="chain" id="PRO_1000121916" description="Glutamate-1-semialdehyde 2,1-aminomutase">
    <location>
        <begin position="1"/>
        <end position="426"/>
    </location>
</feature>
<feature type="modified residue" description="N6-(pyridoxal phosphate)lysine" evidence="1">
    <location>
        <position position="265"/>
    </location>
</feature>
<organism>
    <name type="scientific">Salmonella gallinarum (strain 287/91 / NCTC 13346)</name>
    <dbReference type="NCBI Taxonomy" id="550538"/>
    <lineage>
        <taxon>Bacteria</taxon>
        <taxon>Pseudomonadati</taxon>
        <taxon>Pseudomonadota</taxon>
        <taxon>Gammaproteobacteria</taxon>
        <taxon>Enterobacterales</taxon>
        <taxon>Enterobacteriaceae</taxon>
        <taxon>Salmonella</taxon>
    </lineage>
</organism>
<proteinExistence type="inferred from homology"/>
<sequence length="426" mass="45388">MSKSENLYSAARELIPGGVNSPVRAFTGVGGTPLFIEKADGAYLYDVDGKAYIDYVGSWGPMVLGHNHPAIRNAVIEAAERGLSFGAPTEMEVKMAELVTNLVPTMDMVRMVNSGTEATMSAIRLARGFTGRDKIIKFEGCYHGHADCLLVKAGSGALTLGQPNSPGVPADFAKHTLTCTYNDLTSVHAAFEQYPQEIACIIVEPVAGNMNCVPPLPEFLPGLRALCDEFGALLIIDEVMTGFRVALAGAQDYYGVVPDLTCLGKIIGGGMPVGAFGGRRDVMDALAPTGPVYQAGTLSGNPIAMAAGFACLNEVAQPGIHETLDELTTRLAEGLLEAAEDANIPLVVNHVGGMFGIFFTDAESVTCYQDVMACDVERFKRFFHLMLEEGVYLAPSAFEAGFMSVAHSEEDINNTIDAARRVFAKL</sequence>
<evidence type="ECO:0000255" key="1">
    <source>
        <dbReference type="HAMAP-Rule" id="MF_00375"/>
    </source>
</evidence>
<name>GSA_SALG2</name>
<reference key="1">
    <citation type="journal article" date="2008" name="Genome Res.">
        <title>Comparative genome analysis of Salmonella enteritidis PT4 and Salmonella gallinarum 287/91 provides insights into evolutionary and host adaptation pathways.</title>
        <authorList>
            <person name="Thomson N.R."/>
            <person name="Clayton D.J."/>
            <person name="Windhorst D."/>
            <person name="Vernikos G."/>
            <person name="Davidson S."/>
            <person name="Churcher C."/>
            <person name="Quail M.A."/>
            <person name="Stevens M."/>
            <person name="Jones M.A."/>
            <person name="Watson M."/>
            <person name="Barron A."/>
            <person name="Layton A."/>
            <person name="Pickard D."/>
            <person name="Kingsley R.A."/>
            <person name="Bignell A."/>
            <person name="Clark L."/>
            <person name="Harris B."/>
            <person name="Ormond D."/>
            <person name="Abdellah Z."/>
            <person name="Brooks K."/>
            <person name="Cherevach I."/>
            <person name="Chillingworth T."/>
            <person name="Woodward J."/>
            <person name="Norberczak H."/>
            <person name="Lord A."/>
            <person name="Arrowsmith C."/>
            <person name="Jagels K."/>
            <person name="Moule S."/>
            <person name="Mungall K."/>
            <person name="Saunders M."/>
            <person name="Whitehead S."/>
            <person name="Chabalgoity J.A."/>
            <person name="Maskell D."/>
            <person name="Humphreys T."/>
            <person name="Roberts M."/>
            <person name="Barrow P.A."/>
            <person name="Dougan G."/>
            <person name="Parkhill J."/>
        </authorList>
    </citation>
    <scope>NUCLEOTIDE SEQUENCE [LARGE SCALE GENOMIC DNA]</scope>
    <source>
        <strain>287/91 / NCTC 13346</strain>
    </source>
</reference>
<dbReference type="EC" id="5.4.3.8" evidence="1"/>
<dbReference type="EMBL" id="AM933173">
    <property type="protein sequence ID" value="CAR36113.1"/>
    <property type="molecule type" value="Genomic_DNA"/>
</dbReference>
<dbReference type="RefSeq" id="WP_000045253.1">
    <property type="nucleotide sequence ID" value="NC_011274.1"/>
</dbReference>
<dbReference type="SMR" id="B5RHE0"/>
<dbReference type="KEGG" id="seg:SG0206"/>
<dbReference type="HOGENOM" id="CLU_016922_1_5_6"/>
<dbReference type="UniPathway" id="UPA00251">
    <property type="reaction ID" value="UER00317"/>
</dbReference>
<dbReference type="Proteomes" id="UP000008321">
    <property type="component" value="Chromosome"/>
</dbReference>
<dbReference type="GO" id="GO:0005737">
    <property type="term" value="C:cytoplasm"/>
    <property type="evidence" value="ECO:0007669"/>
    <property type="project" value="UniProtKB-SubCell"/>
</dbReference>
<dbReference type="GO" id="GO:0042286">
    <property type="term" value="F:glutamate-1-semialdehyde 2,1-aminomutase activity"/>
    <property type="evidence" value="ECO:0007669"/>
    <property type="project" value="UniProtKB-UniRule"/>
</dbReference>
<dbReference type="GO" id="GO:0030170">
    <property type="term" value="F:pyridoxal phosphate binding"/>
    <property type="evidence" value="ECO:0007669"/>
    <property type="project" value="InterPro"/>
</dbReference>
<dbReference type="GO" id="GO:0008483">
    <property type="term" value="F:transaminase activity"/>
    <property type="evidence" value="ECO:0007669"/>
    <property type="project" value="InterPro"/>
</dbReference>
<dbReference type="GO" id="GO:0006782">
    <property type="term" value="P:protoporphyrinogen IX biosynthetic process"/>
    <property type="evidence" value="ECO:0007669"/>
    <property type="project" value="UniProtKB-UniRule"/>
</dbReference>
<dbReference type="CDD" id="cd00610">
    <property type="entry name" value="OAT_like"/>
    <property type="match status" value="1"/>
</dbReference>
<dbReference type="FunFam" id="3.40.640.10:FF:000021">
    <property type="entry name" value="Glutamate-1-semialdehyde 2,1-aminomutase"/>
    <property type="match status" value="1"/>
</dbReference>
<dbReference type="FunFam" id="3.90.1150.10:FF:000012">
    <property type="entry name" value="Glutamate-1-semialdehyde 2,1-aminomutase"/>
    <property type="match status" value="1"/>
</dbReference>
<dbReference type="Gene3D" id="3.90.1150.10">
    <property type="entry name" value="Aspartate Aminotransferase, domain 1"/>
    <property type="match status" value="1"/>
</dbReference>
<dbReference type="Gene3D" id="3.40.640.10">
    <property type="entry name" value="Type I PLP-dependent aspartate aminotransferase-like (Major domain)"/>
    <property type="match status" value="1"/>
</dbReference>
<dbReference type="HAMAP" id="MF_00375">
    <property type="entry name" value="HemL_aminotrans_3"/>
    <property type="match status" value="1"/>
</dbReference>
<dbReference type="InterPro" id="IPR004639">
    <property type="entry name" value="4pyrrol_synth_GluAld_NH2Trfase"/>
</dbReference>
<dbReference type="InterPro" id="IPR005814">
    <property type="entry name" value="Aminotrans_3"/>
</dbReference>
<dbReference type="InterPro" id="IPR049704">
    <property type="entry name" value="Aminotrans_3_PPA_site"/>
</dbReference>
<dbReference type="InterPro" id="IPR015424">
    <property type="entry name" value="PyrdxlP-dep_Trfase"/>
</dbReference>
<dbReference type="InterPro" id="IPR015421">
    <property type="entry name" value="PyrdxlP-dep_Trfase_major"/>
</dbReference>
<dbReference type="InterPro" id="IPR015422">
    <property type="entry name" value="PyrdxlP-dep_Trfase_small"/>
</dbReference>
<dbReference type="NCBIfam" id="TIGR00713">
    <property type="entry name" value="hemL"/>
    <property type="match status" value="1"/>
</dbReference>
<dbReference type="NCBIfam" id="NF000818">
    <property type="entry name" value="PRK00062.1"/>
    <property type="match status" value="1"/>
</dbReference>
<dbReference type="PANTHER" id="PTHR43713">
    <property type="entry name" value="GLUTAMATE-1-SEMIALDEHYDE 2,1-AMINOMUTASE"/>
    <property type="match status" value="1"/>
</dbReference>
<dbReference type="PANTHER" id="PTHR43713:SF3">
    <property type="entry name" value="GLUTAMATE-1-SEMIALDEHYDE 2,1-AMINOMUTASE 1, CHLOROPLASTIC-RELATED"/>
    <property type="match status" value="1"/>
</dbReference>
<dbReference type="Pfam" id="PF00202">
    <property type="entry name" value="Aminotran_3"/>
    <property type="match status" value="1"/>
</dbReference>
<dbReference type="SUPFAM" id="SSF53383">
    <property type="entry name" value="PLP-dependent transferases"/>
    <property type="match status" value="1"/>
</dbReference>
<dbReference type="PROSITE" id="PS00600">
    <property type="entry name" value="AA_TRANSFER_CLASS_3"/>
    <property type="match status" value="1"/>
</dbReference>